<evidence type="ECO:0000255" key="1">
    <source>
        <dbReference type="PROSITE-ProRule" id="PRU00977"/>
    </source>
</evidence>
<evidence type="ECO:0000305" key="2"/>
<name>Y709_STRSV</name>
<gene>
    <name type="ordered locus">SSA_0709</name>
</gene>
<comment type="similarity">
    <text evidence="2">Belongs to the UPF0213 family.</text>
</comment>
<accession>A3CLU1</accession>
<sequence length="87" mass="9857">MENKAYMYVLECGDGSLYTGYTTDVQARLKKHQAGKGAKYTRARLPVTLLYQEEHPSKPAAMSAEALFKKKTRQAKLAYIKERTQNA</sequence>
<proteinExistence type="inferred from homology"/>
<reference key="1">
    <citation type="journal article" date="2007" name="J. Bacteriol.">
        <title>Genome of the opportunistic pathogen Streptococcus sanguinis.</title>
        <authorList>
            <person name="Xu P."/>
            <person name="Alves J.M."/>
            <person name="Kitten T."/>
            <person name="Brown A."/>
            <person name="Chen Z."/>
            <person name="Ozaki L.S."/>
            <person name="Manque P."/>
            <person name="Ge X."/>
            <person name="Serrano M.G."/>
            <person name="Puiu D."/>
            <person name="Hendricks S."/>
            <person name="Wang Y."/>
            <person name="Chaplin M.D."/>
            <person name="Akan D."/>
            <person name="Paik S."/>
            <person name="Peterson D.L."/>
            <person name="Macrina F.L."/>
            <person name="Buck G.A."/>
        </authorList>
    </citation>
    <scope>NUCLEOTIDE SEQUENCE [LARGE SCALE GENOMIC DNA]</scope>
    <source>
        <strain>SK36</strain>
    </source>
</reference>
<keyword id="KW-1185">Reference proteome</keyword>
<organism>
    <name type="scientific">Streptococcus sanguinis (strain SK36)</name>
    <dbReference type="NCBI Taxonomy" id="388919"/>
    <lineage>
        <taxon>Bacteria</taxon>
        <taxon>Bacillati</taxon>
        <taxon>Bacillota</taxon>
        <taxon>Bacilli</taxon>
        <taxon>Lactobacillales</taxon>
        <taxon>Streptococcaceae</taxon>
        <taxon>Streptococcus</taxon>
    </lineage>
</organism>
<dbReference type="EMBL" id="CP000387">
    <property type="protein sequence ID" value="ABN44146.1"/>
    <property type="molecule type" value="Genomic_DNA"/>
</dbReference>
<dbReference type="RefSeq" id="WP_002896092.1">
    <property type="nucleotide sequence ID" value="NZ_CAXTYR010000004.1"/>
</dbReference>
<dbReference type="RefSeq" id="YP_001034696.1">
    <property type="nucleotide sequence ID" value="NC_009009.1"/>
</dbReference>
<dbReference type="SMR" id="A3CLU1"/>
<dbReference type="STRING" id="388919.SSA_0709"/>
<dbReference type="KEGG" id="ssa:SSA_0709"/>
<dbReference type="PATRIC" id="fig|388919.9.peg.683"/>
<dbReference type="eggNOG" id="COG2827">
    <property type="taxonomic scope" value="Bacteria"/>
</dbReference>
<dbReference type="HOGENOM" id="CLU_135650_0_3_9"/>
<dbReference type="OrthoDB" id="9807770at2"/>
<dbReference type="Proteomes" id="UP000002148">
    <property type="component" value="Chromosome"/>
</dbReference>
<dbReference type="CDD" id="cd10456">
    <property type="entry name" value="GIY-YIG_UPF0213"/>
    <property type="match status" value="1"/>
</dbReference>
<dbReference type="Gene3D" id="3.40.1440.10">
    <property type="entry name" value="GIY-YIG endonuclease"/>
    <property type="match status" value="1"/>
</dbReference>
<dbReference type="InterPro" id="IPR000305">
    <property type="entry name" value="GIY-YIG_endonuc"/>
</dbReference>
<dbReference type="InterPro" id="IPR035901">
    <property type="entry name" value="GIY-YIG_endonuc_sf"/>
</dbReference>
<dbReference type="InterPro" id="IPR050190">
    <property type="entry name" value="UPF0213_domain"/>
</dbReference>
<dbReference type="PANTHER" id="PTHR34477">
    <property type="entry name" value="UPF0213 PROTEIN YHBQ"/>
    <property type="match status" value="1"/>
</dbReference>
<dbReference type="PANTHER" id="PTHR34477:SF1">
    <property type="entry name" value="UPF0213 PROTEIN YHBQ"/>
    <property type="match status" value="1"/>
</dbReference>
<dbReference type="Pfam" id="PF01541">
    <property type="entry name" value="GIY-YIG"/>
    <property type="match status" value="1"/>
</dbReference>
<dbReference type="SUPFAM" id="SSF82771">
    <property type="entry name" value="GIY-YIG endonuclease"/>
    <property type="match status" value="1"/>
</dbReference>
<dbReference type="PROSITE" id="PS50164">
    <property type="entry name" value="GIY_YIG"/>
    <property type="match status" value="1"/>
</dbReference>
<protein>
    <recommendedName>
        <fullName>UPF0213 protein SSA_0709</fullName>
    </recommendedName>
</protein>
<feature type="chain" id="PRO_1000063697" description="UPF0213 protein SSA_0709">
    <location>
        <begin position="1"/>
        <end position="87"/>
    </location>
</feature>
<feature type="domain" description="GIY-YIG" evidence="1">
    <location>
        <begin position="3"/>
        <end position="78"/>
    </location>
</feature>